<organism>
    <name type="scientific">Ectopseudomonas mendocina (strain ymp)</name>
    <name type="common">Pseudomonas mendocina</name>
    <dbReference type="NCBI Taxonomy" id="399739"/>
    <lineage>
        <taxon>Bacteria</taxon>
        <taxon>Pseudomonadati</taxon>
        <taxon>Pseudomonadota</taxon>
        <taxon>Gammaproteobacteria</taxon>
        <taxon>Pseudomonadales</taxon>
        <taxon>Pseudomonadaceae</taxon>
        <taxon>Ectopseudomonas</taxon>
    </lineage>
</organism>
<keyword id="KW-0963">Cytoplasm</keyword>
<keyword id="KW-0378">Hydrolase</keyword>
<keyword id="KW-0645">Protease</keyword>
<keyword id="KW-0720">Serine protease</keyword>
<proteinExistence type="inferred from homology"/>
<dbReference type="EC" id="3.4.21.92" evidence="1"/>
<dbReference type="EMBL" id="CP000680">
    <property type="protein sequence ID" value="ABP84811.1"/>
    <property type="molecule type" value="Genomic_DNA"/>
</dbReference>
<dbReference type="SMR" id="A4XTZ5"/>
<dbReference type="STRING" id="399739.Pmen_2050"/>
<dbReference type="MEROPS" id="S14.001"/>
<dbReference type="KEGG" id="pmy:Pmen_2050"/>
<dbReference type="PATRIC" id="fig|399739.8.peg.2079"/>
<dbReference type="eggNOG" id="COG0740">
    <property type="taxonomic scope" value="Bacteria"/>
</dbReference>
<dbReference type="HOGENOM" id="CLU_058707_3_2_6"/>
<dbReference type="OrthoDB" id="9802800at2"/>
<dbReference type="GO" id="GO:0005737">
    <property type="term" value="C:cytoplasm"/>
    <property type="evidence" value="ECO:0007669"/>
    <property type="project" value="UniProtKB-SubCell"/>
</dbReference>
<dbReference type="GO" id="GO:0009368">
    <property type="term" value="C:endopeptidase Clp complex"/>
    <property type="evidence" value="ECO:0007669"/>
    <property type="project" value="TreeGrafter"/>
</dbReference>
<dbReference type="GO" id="GO:0004176">
    <property type="term" value="F:ATP-dependent peptidase activity"/>
    <property type="evidence" value="ECO:0007669"/>
    <property type="project" value="InterPro"/>
</dbReference>
<dbReference type="GO" id="GO:0051117">
    <property type="term" value="F:ATPase binding"/>
    <property type="evidence" value="ECO:0007669"/>
    <property type="project" value="TreeGrafter"/>
</dbReference>
<dbReference type="GO" id="GO:0004252">
    <property type="term" value="F:serine-type endopeptidase activity"/>
    <property type="evidence" value="ECO:0007669"/>
    <property type="project" value="UniProtKB-UniRule"/>
</dbReference>
<dbReference type="GO" id="GO:0006515">
    <property type="term" value="P:protein quality control for misfolded or incompletely synthesized proteins"/>
    <property type="evidence" value="ECO:0007669"/>
    <property type="project" value="TreeGrafter"/>
</dbReference>
<dbReference type="CDD" id="cd07017">
    <property type="entry name" value="S14_ClpP_2"/>
    <property type="match status" value="1"/>
</dbReference>
<dbReference type="FunFam" id="3.90.226.10:FF:000001">
    <property type="entry name" value="ATP-dependent Clp protease proteolytic subunit"/>
    <property type="match status" value="1"/>
</dbReference>
<dbReference type="Gene3D" id="3.90.226.10">
    <property type="entry name" value="2-enoyl-CoA Hydratase, Chain A, domain 1"/>
    <property type="match status" value="1"/>
</dbReference>
<dbReference type="HAMAP" id="MF_00444">
    <property type="entry name" value="ClpP"/>
    <property type="match status" value="1"/>
</dbReference>
<dbReference type="InterPro" id="IPR001907">
    <property type="entry name" value="ClpP"/>
</dbReference>
<dbReference type="InterPro" id="IPR029045">
    <property type="entry name" value="ClpP/crotonase-like_dom_sf"/>
</dbReference>
<dbReference type="InterPro" id="IPR023562">
    <property type="entry name" value="ClpP/TepA"/>
</dbReference>
<dbReference type="InterPro" id="IPR033135">
    <property type="entry name" value="ClpP_His_AS"/>
</dbReference>
<dbReference type="InterPro" id="IPR018215">
    <property type="entry name" value="ClpP_Ser_AS"/>
</dbReference>
<dbReference type="NCBIfam" id="TIGR00493">
    <property type="entry name" value="clpP"/>
    <property type="match status" value="1"/>
</dbReference>
<dbReference type="NCBIfam" id="NF001368">
    <property type="entry name" value="PRK00277.1"/>
    <property type="match status" value="1"/>
</dbReference>
<dbReference type="NCBIfam" id="NF009205">
    <property type="entry name" value="PRK12553.1"/>
    <property type="match status" value="1"/>
</dbReference>
<dbReference type="PANTHER" id="PTHR10381">
    <property type="entry name" value="ATP-DEPENDENT CLP PROTEASE PROTEOLYTIC SUBUNIT"/>
    <property type="match status" value="1"/>
</dbReference>
<dbReference type="PANTHER" id="PTHR10381:SF70">
    <property type="entry name" value="ATP-DEPENDENT CLP PROTEASE PROTEOLYTIC SUBUNIT"/>
    <property type="match status" value="1"/>
</dbReference>
<dbReference type="Pfam" id="PF00574">
    <property type="entry name" value="CLP_protease"/>
    <property type="match status" value="1"/>
</dbReference>
<dbReference type="PRINTS" id="PR00127">
    <property type="entry name" value="CLPPROTEASEP"/>
</dbReference>
<dbReference type="SUPFAM" id="SSF52096">
    <property type="entry name" value="ClpP/crotonase"/>
    <property type="match status" value="1"/>
</dbReference>
<dbReference type="PROSITE" id="PS00382">
    <property type="entry name" value="CLP_PROTEASE_HIS"/>
    <property type="match status" value="1"/>
</dbReference>
<dbReference type="PROSITE" id="PS00381">
    <property type="entry name" value="CLP_PROTEASE_SER"/>
    <property type="match status" value="1"/>
</dbReference>
<name>CLPP_ECTM1</name>
<evidence type="ECO:0000255" key="1">
    <source>
        <dbReference type="HAMAP-Rule" id="MF_00444"/>
    </source>
</evidence>
<accession>A4XTZ5</accession>
<feature type="chain" id="PRO_1000026114" description="ATP-dependent Clp protease proteolytic subunit">
    <location>
        <begin position="1"/>
        <end position="213"/>
    </location>
</feature>
<feature type="active site" description="Nucleophile" evidence="1">
    <location>
        <position position="114"/>
    </location>
</feature>
<feature type="active site" evidence="1">
    <location>
        <position position="139"/>
    </location>
</feature>
<comment type="function">
    <text evidence="1">Cleaves peptides in various proteins in a process that requires ATP hydrolysis. Has a chymotrypsin-like activity. Plays a major role in the degradation of misfolded proteins.</text>
</comment>
<comment type="catalytic activity">
    <reaction evidence="1">
        <text>Hydrolysis of proteins to small peptides in the presence of ATP and magnesium. alpha-casein is the usual test substrate. In the absence of ATP, only oligopeptides shorter than five residues are hydrolyzed (such as succinyl-Leu-Tyr-|-NHMec, and Leu-Tyr-Leu-|-Tyr-Trp, in which cleavage of the -Tyr-|-Leu- and -Tyr-|-Trp bonds also occurs).</text>
        <dbReference type="EC" id="3.4.21.92"/>
    </reaction>
</comment>
<comment type="subunit">
    <text evidence="1">Fourteen ClpP subunits assemble into 2 heptameric rings which stack back to back to give a disk-like structure with a central cavity, resembling the structure of eukaryotic proteasomes.</text>
</comment>
<comment type="subcellular location">
    <subcellularLocation>
        <location evidence="1">Cytoplasm</location>
    </subcellularLocation>
</comment>
<comment type="similarity">
    <text evidence="1">Belongs to the peptidase S14 family.</text>
</comment>
<reference key="1">
    <citation type="submission" date="2007-04" db="EMBL/GenBank/DDBJ databases">
        <title>Complete sequence of Pseudomonas mendocina ymp.</title>
        <authorList>
            <consortium name="US DOE Joint Genome Institute"/>
            <person name="Copeland A."/>
            <person name="Lucas S."/>
            <person name="Lapidus A."/>
            <person name="Barry K."/>
            <person name="Glavina del Rio T."/>
            <person name="Dalin E."/>
            <person name="Tice H."/>
            <person name="Pitluck S."/>
            <person name="Kiss H."/>
            <person name="Brettin T."/>
            <person name="Detter J.C."/>
            <person name="Bruce D."/>
            <person name="Han C."/>
            <person name="Schmutz J."/>
            <person name="Larimer F."/>
            <person name="Land M."/>
            <person name="Hauser L."/>
            <person name="Kyrpides N."/>
            <person name="Mikhailova N."/>
            <person name="Hersman L."/>
            <person name="Dubois J."/>
            <person name="Maurice P."/>
            <person name="Richardson P."/>
        </authorList>
    </citation>
    <scope>NUCLEOTIDE SEQUENCE [LARGE SCALE GENOMIC DNA]</scope>
    <source>
        <strain>ymp</strain>
    </source>
</reference>
<protein>
    <recommendedName>
        <fullName evidence="1">ATP-dependent Clp protease proteolytic subunit</fullName>
        <ecNumber evidence="1">3.4.21.92</ecNumber>
    </recommendedName>
    <alternativeName>
        <fullName evidence="1">Endopeptidase Clp</fullName>
    </alternativeName>
</protein>
<sequence length="213" mass="23661">MSRNPFMQNMPEIQAAGGLVPMVIEQSARGERAYDIYSRLLKERVIFLVGQVEDYMANLICAQLLFLEAENPDKDIHLYINSPGGSVTAGMAIYDTMQFIKADVSTTCIGQACSMGAFLLAGGAKGKRFCLPNSRVMIHQPLGGFQGQASDIEIHAKEILFIRERLNELLAHHTGQSLETIERDTNRDNFMSAPRAVEYGIVDAVHEKRQMPV</sequence>
<gene>
    <name evidence="1" type="primary">clpP</name>
    <name type="ordered locus">Pmen_2050</name>
</gene>